<gene>
    <name evidence="1" type="primary">purL</name>
    <name type="ordered locus">BMEA_A0876</name>
</gene>
<dbReference type="EC" id="6.3.5.3" evidence="1"/>
<dbReference type="EMBL" id="CP001488">
    <property type="protein sequence ID" value="ACO00629.1"/>
    <property type="molecule type" value="Genomic_DNA"/>
</dbReference>
<dbReference type="RefSeq" id="WP_002966777.1">
    <property type="nucleotide sequence ID" value="NC_012441.1"/>
</dbReference>
<dbReference type="SMR" id="C0RIH1"/>
<dbReference type="GeneID" id="93016781"/>
<dbReference type="KEGG" id="bmi:BMEA_A0876"/>
<dbReference type="HOGENOM" id="CLU_003100_0_1_5"/>
<dbReference type="UniPathway" id="UPA00074">
    <property type="reaction ID" value="UER00128"/>
</dbReference>
<dbReference type="PRO" id="PR:C0RIH1"/>
<dbReference type="Proteomes" id="UP000001748">
    <property type="component" value="Chromosome I"/>
</dbReference>
<dbReference type="GO" id="GO:0005737">
    <property type="term" value="C:cytoplasm"/>
    <property type="evidence" value="ECO:0007669"/>
    <property type="project" value="UniProtKB-SubCell"/>
</dbReference>
<dbReference type="GO" id="GO:0005524">
    <property type="term" value="F:ATP binding"/>
    <property type="evidence" value="ECO:0007669"/>
    <property type="project" value="UniProtKB-UniRule"/>
</dbReference>
<dbReference type="GO" id="GO:0000287">
    <property type="term" value="F:magnesium ion binding"/>
    <property type="evidence" value="ECO:0007669"/>
    <property type="project" value="UniProtKB-UniRule"/>
</dbReference>
<dbReference type="GO" id="GO:0004642">
    <property type="term" value="F:phosphoribosylformylglycinamidine synthase activity"/>
    <property type="evidence" value="ECO:0007669"/>
    <property type="project" value="UniProtKB-UniRule"/>
</dbReference>
<dbReference type="GO" id="GO:0006189">
    <property type="term" value="P:'de novo' IMP biosynthetic process"/>
    <property type="evidence" value="ECO:0007669"/>
    <property type="project" value="UniProtKB-UniRule"/>
</dbReference>
<dbReference type="CDD" id="cd02203">
    <property type="entry name" value="PurL_repeat1"/>
    <property type="match status" value="1"/>
</dbReference>
<dbReference type="CDD" id="cd02204">
    <property type="entry name" value="PurL_repeat2"/>
    <property type="match status" value="1"/>
</dbReference>
<dbReference type="FunFam" id="3.30.1330.10:FF:000004">
    <property type="entry name" value="Phosphoribosylformylglycinamidine synthase subunit PurL"/>
    <property type="match status" value="1"/>
</dbReference>
<dbReference type="Gene3D" id="3.90.650.10">
    <property type="entry name" value="PurM-like C-terminal domain"/>
    <property type="match status" value="2"/>
</dbReference>
<dbReference type="Gene3D" id="3.30.1330.10">
    <property type="entry name" value="PurM-like, N-terminal domain"/>
    <property type="match status" value="2"/>
</dbReference>
<dbReference type="HAMAP" id="MF_00420">
    <property type="entry name" value="PurL_2"/>
    <property type="match status" value="1"/>
</dbReference>
<dbReference type="InterPro" id="IPR010074">
    <property type="entry name" value="PRibForGlyAmidine_synth_PurL"/>
</dbReference>
<dbReference type="InterPro" id="IPR041609">
    <property type="entry name" value="PurL_linker"/>
</dbReference>
<dbReference type="InterPro" id="IPR010918">
    <property type="entry name" value="PurM-like_C_dom"/>
</dbReference>
<dbReference type="InterPro" id="IPR036676">
    <property type="entry name" value="PurM-like_C_sf"/>
</dbReference>
<dbReference type="InterPro" id="IPR016188">
    <property type="entry name" value="PurM-like_N"/>
</dbReference>
<dbReference type="InterPro" id="IPR036921">
    <property type="entry name" value="PurM-like_N_sf"/>
</dbReference>
<dbReference type="NCBIfam" id="TIGR01736">
    <property type="entry name" value="FGAM_synth_II"/>
    <property type="match status" value="1"/>
</dbReference>
<dbReference type="NCBIfam" id="NF002290">
    <property type="entry name" value="PRK01213.1"/>
    <property type="match status" value="1"/>
</dbReference>
<dbReference type="PANTHER" id="PTHR43555">
    <property type="entry name" value="PHOSPHORIBOSYLFORMYLGLYCINAMIDINE SYNTHASE SUBUNIT PURL"/>
    <property type="match status" value="1"/>
</dbReference>
<dbReference type="PANTHER" id="PTHR43555:SF1">
    <property type="entry name" value="PHOSPHORIBOSYLFORMYLGLYCINAMIDINE SYNTHASE SUBUNIT PURL"/>
    <property type="match status" value="1"/>
</dbReference>
<dbReference type="Pfam" id="PF00586">
    <property type="entry name" value="AIRS"/>
    <property type="match status" value="2"/>
</dbReference>
<dbReference type="Pfam" id="PF02769">
    <property type="entry name" value="AIRS_C"/>
    <property type="match status" value="2"/>
</dbReference>
<dbReference type="Pfam" id="PF18072">
    <property type="entry name" value="FGAR-AT_linker"/>
    <property type="match status" value="1"/>
</dbReference>
<dbReference type="PIRSF" id="PIRSF001587">
    <property type="entry name" value="FGAM_synthase_II"/>
    <property type="match status" value="1"/>
</dbReference>
<dbReference type="SUPFAM" id="SSF56042">
    <property type="entry name" value="PurM C-terminal domain-like"/>
    <property type="match status" value="2"/>
</dbReference>
<dbReference type="SUPFAM" id="SSF55326">
    <property type="entry name" value="PurM N-terminal domain-like"/>
    <property type="match status" value="2"/>
</dbReference>
<reference key="1">
    <citation type="submission" date="2009-03" db="EMBL/GenBank/DDBJ databases">
        <title>Brucella melitensis ATCC 23457 whole genome shotgun sequencing project.</title>
        <authorList>
            <person name="Setubal J.C."/>
            <person name="Boyle S."/>
            <person name="Crasta O.R."/>
            <person name="Gillespie J.J."/>
            <person name="Kenyon R.W."/>
            <person name="Lu J."/>
            <person name="Mane S."/>
            <person name="Nagrani S."/>
            <person name="Shallom J.M."/>
            <person name="Shallom S."/>
            <person name="Shukla M."/>
            <person name="Snyder E.E."/>
            <person name="Sobral B.W."/>
            <person name="Wattam A.R."/>
            <person name="Will R."/>
            <person name="Williams K."/>
            <person name="Yoo H."/>
            <person name="Munk C."/>
            <person name="Tapia R."/>
            <person name="Han C."/>
            <person name="Detter J.C."/>
            <person name="Bruce D."/>
            <person name="Brettin T.S."/>
        </authorList>
    </citation>
    <scope>NUCLEOTIDE SEQUENCE [LARGE SCALE GENOMIC DNA]</scope>
    <source>
        <strain>ATCC 23457</strain>
    </source>
</reference>
<name>PURL_BRUMB</name>
<evidence type="ECO:0000255" key="1">
    <source>
        <dbReference type="HAMAP-Rule" id="MF_00420"/>
    </source>
</evidence>
<sequence>MTISNTRDITPELIEAHGLKPDEYQRILELIGREPTFTELGIFSAMWNEHCSYKSSKKWLRTLPTSGPRVIQGPGENAGVVDIGDGDCVVFKMESHNHPSYIEPYQGAATGVGGILRDVFTMGARPVAAMNALRFGEPDHPKTRHLVSGVVSGVGGYGNAFGVPTVGGEVNFDKRYNGNILVNAFAAGLARHDGIFLSEAEGVGLPVVYLGAKTSRDGVGGATMASAEFDESIEEKRPTVQVGDPFTEKCLLEACLELMASGAVIAIQDMGAAGLTCSAVEMGAKGDLGIELILDHVPVREENMTAYEMMLSESQERMLMVLKPEKEAEAQAIFRKWGLDFAIVGKTTDDLRFRVIHQGEEVANLPIKDLGDEAPEYDRPWMEPGKHAPLPASNVPQVEDYSAALLKLIGSPDLSSRRWVYEQYDTLIQGNSLQVPGGDAGVIRVEGHETKALAFSSDVTPRYCEADPFEGGKQAVAECWRNITATGAEPLASTDNLNFGNPEKPEIMGQLVKAIEGIGEACRALDFPIVSGNVSLYNETNGQAILPTPTIAGVGLLPDWSQMAKIGGMQDGDTLVLLGGDGTHLGQSVYLRDLFDRADGPAPFVDLALEKRNGEFVRSAIRNGQVTACHDLSDGGLAIAVAEMAIKSGKGATLDAGDGLPHALLFGEDQARYVISATPEMAKLIALNAEGAGVPFRILGTVGGDRLKISKNVDVSVADLTQAYEGWFPNFMNGELTGNN</sequence>
<protein>
    <recommendedName>
        <fullName evidence="1">Phosphoribosylformylglycinamidine synthase subunit PurL</fullName>
        <shortName evidence="1">FGAM synthase</shortName>
        <ecNumber evidence="1">6.3.5.3</ecNumber>
    </recommendedName>
    <alternativeName>
        <fullName evidence="1">Formylglycinamide ribonucleotide amidotransferase subunit II</fullName>
        <shortName evidence="1">FGAR amidotransferase II</shortName>
        <shortName evidence="1">FGAR-AT II</shortName>
    </alternativeName>
    <alternativeName>
        <fullName evidence="1">Glutamine amidotransferase PurL</fullName>
    </alternativeName>
    <alternativeName>
        <fullName evidence="1">Phosphoribosylformylglycinamidine synthase subunit II</fullName>
    </alternativeName>
</protein>
<proteinExistence type="inferred from homology"/>
<comment type="function">
    <text evidence="1">Part of the phosphoribosylformylglycinamidine synthase complex involved in the purines biosynthetic pathway. Catalyzes the ATP-dependent conversion of formylglycinamide ribonucleotide (FGAR) and glutamine to yield formylglycinamidine ribonucleotide (FGAM) and glutamate. The FGAM synthase complex is composed of three subunits. PurQ produces an ammonia molecule by converting glutamine to glutamate. PurL transfers the ammonia molecule to FGAR to form FGAM in an ATP-dependent manner. PurS interacts with PurQ and PurL and is thought to assist in the transfer of the ammonia molecule from PurQ to PurL.</text>
</comment>
<comment type="catalytic activity">
    <reaction evidence="1">
        <text>N(2)-formyl-N(1)-(5-phospho-beta-D-ribosyl)glycinamide + L-glutamine + ATP + H2O = 2-formamido-N(1)-(5-O-phospho-beta-D-ribosyl)acetamidine + L-glutamate + ADP + phosphate + H(+)</text>
        <dbReference type="Rhea" id="RHEA:17129"/>
        <dbReference type="ChEBI" id="CHEBI:15377"/>
        <dbReference type="ChEBI" id="CHEBI:15378"/>
        <dbReference type="ChEBI" id="CHEBI:29985"/>
        <dbReference type="ChEBI" id="CHEBI:30616"/>
        <dbReference type="ChEBI" id="CHEBI:43474"/>
        <dbReference type="ChEBI" id="CHEBI:58359"/>
        <dbReference type="ChEBI" id="CHEBI:147286"/>
        <dbReference type="ChEBI" id="CHEBI:147287"/>
        <dbReference type="ChEBI" id="CHEBI:456216"/>
        <dbReference type="EC" id="6.3.5.3"/>
    </reaction>
</comment>
<comment type="pathway">
    <text evidence="1">Purine metabolism; IMP biosynthesis via de novo pathway; 5-amino-1-(5-phospho-D-ribosyl)imidazole from N(2)-formyl-N(1)-(5-phospho-D-ribosyl)glycinamide: step 1/2.</text>
</comment>
<comment type="subunit">
    <text evidence="1">Monomer. Part of the FGAM synthase complex composed of 1 PurL, 1 PurQ and 2 PurS subunits.</text>
</comment>
<comment type="subcellular location">
    <subcellularLocation>
        <location evidence="1">Cytoplasm</location>
    </subcellularLocation>
</comment>
<comment type="similarity">
    <text evidence="1">Belongs to the FGAMS family.</text>
</comment>
<feature type="chain" id="PRO_1000134896" description="Phosphoribosylformylglycinamidine synthase subunit PurL">
    <location>
        <begin position="1"/>
        <end position="740"/>
    </location>
</feature>
<feature type="active site" evidence="1">
    <location>
        <position position="50"/>
    </location>
</feature>
<feature type="active site" description="Proton acceptor" evidence="1">
    <location>
        <position position="96"/>
    </location>
</feature>
<feature type="binding site" evidence="1">
    <location>
        <position position="53"/>
    </location>
    <ligand>
        <name>ATP</name>
        <dbReference type="ChEBI" id="CHEBI:30616"/>
    </ligand>
</feature>
<feature type="binding site" evidence="1">
    <location>
        <position position="92"/>
    </location>
    <ligand>
        <name>ATP</name>
        <dbReference type="ChEBI" id="CHEBI:30616"/>
    </ligand>
</feature>
<feature type="binding site" evidence="1">
    <location>
        <position position="94"/>
    </location>
    <ligand>
        <name>Mg(2+)</name>
        <dbReference type="ChEBI" id="CHEBI:18420"/>
        <label>1</label>
    </ligand>
</feature>
<feature type="binding site" evidence="1">
    <location>
        <begin position="95"/>
        <end position="98"/>
    </location>
    <ligand>
        <name>substrate</name>
    </ligand>
</feature>
<feature type="binding site" evidence="1">
    <location>
        <position position="117"/>
    </location>
    <ligand>
        <name>substrate</name>
    </ligand>
</feature>
<feature type="binding site" evidence="1">
    <location>
        <position position="118"/>
    </location>
    <ligand>
        <name>Mg(2+)</name>
        <dbReference type="ChEBI" id="CHEBI:18420"/>
        <label>2</label>
    </ligand>
</feature>
<feature type="binding site" evidence="1">
    <location>
        <position position="241"/>
    </location>
    <ligand>
        <name>substrate</name>
    </ligand>
</feature>
<feature type="binding site" evidence="1">
    <location>
        <position position="269"/>
    </location>
    <ligand>
        <name>Mg(2+)</name>
        <dbReference type="ChEBI" id="CHEBI:18420"/>
        <label>2</label>
    </ligand>
</feature>
<feature type="binding site" evidence="1">
    <location>
        <begin position="313"/>
        <end position="315"/>
    </location>
    <ligand>
        <name>substrate</name>
    </ligand>
</feature>
<feature type="binding site" evidence="1">
    <location>
        <position position="495"/>
    </location>
    <ligand>
        <name>ATP</name>
        <dbReference type="ChEBI" id="CHEBI:30616"/>
    </ligand>
</feature>
<feature type="binding site" evidence="1">
    <location>
        <position position="532"/>
    </location>
    <ligand>
        <name>ATP</name>
        <dbReference type="ChEBI" id="CHEBI:30616"/>
    </ligand>
</feature>
<feature type="binding site" evidence="1">
    <location>
        <position position="533"/>
    </location>
    <ligand>
        <name>Mg(2+)</name>
        <dbReference type="ChEBI" id="CHEBI:18420"/>
        <label>1</label>
    </ligand>
</feature>
<feature type="binding site" evidence="1">
    <location>
        <position position="535"/>
    </location>
    <ligand>
        <name>substrate</name>
    </ligand>
</feature>
<organism>
    <name type="scientific">Brucella melitensis biotype 2 (strain ATCC 23457)</name>
    <dbReference type="NCBI Taxonomy" id="546272"/>
    <lineage>
        <taxon>Bacteria</taxon>
        <taxon>Pseudomonadati</taxon>
        <taxon>Pseudomonadota</taxon>
        <taxon>Alphaproteobacteria</taxon>
        <taxon>Hyphomicrobiales</taxon>
        <taxon>Brucellaceae</taxon>
        <taxon>Brucella/Ochrobactrum group</taxon>
        <taxon>Brucella</taxon>
    </lineage>
</organism>
<keyword id="KW-0067">ATP-binding</keyword>
<keyword id="KW-0963">Cytoplasm</keyword>
<keyword id="KW-0436">Ligase</keyword>
<keyword id="KW-0460">Magnesium</keyword>
<keyword id="KW-0479">Metal-binding</keyword>
<keyword id="KW-0547">Nucleotide-binding</keyword>
<keyword id="KW-0658">Purine biosynthesis</keyword>
<accession>C0RIH1</accession>